<accession>P07445</accession>
<organism>
    <name type="scientific">Pseudomonas putida</name>
    <name type="common">Arthrobacter siderocapsulatus</name>
    <dbReference type="NCBI Taxonomy" id="303"/>
    <lineage>
        <taxon>Bacteria</taxon>
        <taxon>Pseudomonadati</taxon>
        <taxon>Pseudomonadota</taxon>
        <taxon>Gammaproteobacteria</taxon>
        <taxon>Pseudomonadales</taxon>
        <taxon>Pseudomonadaceae</taxon>
        <taxon>Pseudomonas</taxon>
    </lineage>
</organism>
<reference key="1">
    <citation type="journal article" date="1994" name="J. Bacteriol.">
        <title>Cloning, nucleotide sequence, and overexpression of the gene coding for delta 5-3-ketosteroid isomerase from Pseudomonas putida biotype B.</title>
        <authorList>
            <person name="Kim S.W."/>
            <person name="Kim C.Y."/>
            <person name="Benisek W.F."/>
            <person name="Choi K.Y."/>
        </authorList>
    </citation>
    <scope>NUCLEOTIDE SEQUENCE [GENOMIC DNA]</scope>
    <source>
        <strain>Biotype B</strain>
    </source>
</reference>
<reference key="2">
    <citation type="journal article" date="1986" name="J. Biol. Chem.">
        <title>The amino acid sequence of a delta 5-3-oxosteroid isomerase from Pseudomonas putida biotype B.</title>
        <authorList>
            <person name="Linden K.G."/>
            <person name="Benisek W.F."/>
        </authorList>
    </citation>
    <scope>PROTEIN SEQUENCE</scope>
    <source>
        <strain>Biotype B</strain>
    </source>
</reference>
<reference key="3">
    <citation type="journal article" date="1997" name="Biochemistry">
        <title>High-resolution crystal structures of delta5-3-ketosteroid isomerase with and without a reaction intermediate analogue.</title>
        <authorList>
            <person name="Kim S.-W."/>
            <person name="Cha S.-S."/>
            <person name="Cho H.-S."/>
            <person name="Kim J.-S."/>
            <person name="Ha N.-C."/>
            <person name="Cho M.-J."/>
            <person name="Joo S."/>
            <person name="Kim K.-K."/>
            <person name="Choi K.-Y."/>
            <person name="Oh B.-H."/>
        </authorList>
    </citation>
    <scope>X-RAY CRYSTALLOGRAPHY (2.5 ANGSTROMS) IN COMPLEX WITH REACTION INTERMEDIATE ANALOG</scope>
    <scope>MUTAGENESIS OF TYR-16 AND ASP-103</scope>
</reference>
<reference key="4">
    <citation type="journal article" date="1999" name="Biochemistry">
        <title>Roles of active site aromatic residues in catalysis by ketosteroid isomerase from Pseudomonas putida biotype B.</title>
        <authorList>
            <person name="Kim D.-H."/>
            <person name="Nam G.H."/>
            <person name="Jang D.S."/>
            <person name="Choi G."/>
            <person name="Joo S."/>
            <person name="Kim J.-S."/>
            <person name="Oh B.-H."/>
            <person name="Choi K.-Y."/>
        </authorList>
    </citation>
    <scope>X-RAY CRYSTALLOGRAPHY (2.1 ANGSTROMS)</scope>
</reference>
<reference key="5">
    <citation type="journal article" date="2000" name="Biochemistry">
        <title>Asp-99 donates a hydrogen bond not to Tyr-14 but to the steroid directly in the catalytic mechanism of delta 5-3-ketosteroid isomerase from Pseudomonas putida biotype B.</title>
        <authorList>
            <person name="Choi G."/>
            <person name="Ha N.-C."/>
            <person name="Kim S.W."/>
            <person name="Kim D.-H."/>
            <person name="Park S."/>
            <person name="Oh B.-H."/>
            <person name="Choi K.-Y."/>
        </authorList>
    </citation>
    <scope>X-RAY CRYSTALLOGRAPHY (1.9 ANGSTROMS) OF MUTANT ASN-40/GLU-103 IN COMPLEX WITH REACTION INTERMEDIATE ANALOG</scope>
    <scope>MUTAGENESIS OF TYR-16 AND ASP-103</scope>
</reference>
<reference key="6">
    <citation type="journal article" date="2000" name="J. Biol. Chem.">
        <title>Detection of large pKa perturbations of an inhibitor and a catalytic group at an enzyme active site, a mechanistic basis for catalytic power of many enzymes.</title>
        <authorList>
            <person name="Ha N.-C."/>
            <person name="Kim M.-S."/>
            <person name="Lee W."/>
            <person name="Choi K.-Y."/>
            <person name="Oh B.-H."/>
        </authorList>
    </citation>
    <scope>X-RAY CRYSTALLOGRAPHY (2.5 ANGSTROMS) IN COMPLEX WITH SUBSTRATE</scope>
</reference>
<reference key="7">
    <citation type="journal article" date="2001" name="Biochemistry">
        <title>Maintenance of alpha-helical structures by phenyl rings in the active-site tyrosine triad contributes to catalysis and stability of ketosteroid isomerase from Pseudomonas putida biotype B.</title>
        <authorList>
            <person name="Nam G.H."/>
            <person name="Jang D.S."/>
            <person name="Cha S.-S."/>
            <person name="Lee T.-H."/>
            <person name="Kim D.-H."/>
            <person name="Hong B.H."/>
            <person name="Yun Y.S."/>
            <person name="Oh B.-H."/>
            <person name="Choi K.-Y."/>
        </authorList>
    </citation>
    <scope>X-RAY CRYSTALLOGRAPHY (2.2 ANGSTROMS) OF MUTANT SER-57</scope>
    <scope>MUTAGENESIS OF TYR-16 AND TYR-32</scope>
</reference>
<reference key="8">
    <citation type="journal article" date="2005" name="FEBS J.">
        <title>Small exterior hydrophobic cluster contributes to conformational stability and steroid binding in ketosteroid isomerase from Pseudomonas putida biotype B.</title>
        <authorList>
            <person name="Yun Y.S."/>
            <person name="Nam G.H."/>
            <person name="Kim Y.-G."/>
            <person name="Oh B.-H."/>
            <person name="Choi K.-Y."/>
        </authorList>
    </citation>
    <scope>X-RAY CRYSTALLOGRAPHY (2.1 ANGSTROMS) OF MUTANT ALA-92</scope>
    <scope>MUTAGENESIS OF LEU-125 AND VAL-127</scope>
</reference>
<feature type="chain" id="PRO_0000097646" description="Steroid Delta-isomerase">
    <location>
        <begin position="1"/>
        <end position="131"/>
    </location>
</feature>
<feature type="active site" description="Proton donor">
    <location>
        <position position="16"/>
    </location>
</feature>
<feature type="active site" description="Proton acceptor">
    <location>
        <position position="40"/>
    </location>
</feature>
<feature type="binding site" evidence="2">
    <location>
        <position position="103"/>
    </location>
    <ligand>
        <name>substrate</name>
    </ligand>
</feature>
<feature type="mutagenesis site" description="Reduces activity 2000-fold. Reduces activity 10000-fold; when associated with E-103; N-103 or L-103." evidence="1 3 5">
    <original>Y</original>
    <variation>F</variation>
    <location>
        <position position="16"/>
    </location>
</feature>
<feature type="mutagenesis site" description="Reduces activity 20-fold." evidence="1 3 5">
    <original>Y</original>
    <variation>S</variation>
    <location>
        <position position="16"/>
    </location>
</feature>
<feature type="mutagenesis site" description="Reduces activity 4-fold." evidence="3">
    <original>Y</original>
    <variation>S</variation>
    <location>
        <position position="32"/>
    </location>
</feature>
<feature type="mutagenesis site" description="Reduces activity 100-fold.">
    <original>Y</original>
    <variation>S</variation>
    <location>
        <position position="57"/>
    </location>
</feature>
<feature type="mutagenesis site" description="Slightly reduces activity. Reduces protein stability.">
    <original>W</original>
    <variation>A</variation>
    <location>
        <position position="92"/>
    </location>
</feature>
<feature type="mutagenesis site" description="Reduces activity 100-fold. Reduces activity 10000-fold; when associated with F-16." evidence="1 5">
    <original>D</original>
    <variation>A</variation>
    <variation>L</variation>
    <location>
        <position position="103"/>
    </location>
</feature>
<feature type="mutagenesis site" description="Slightly reduces activity. Reduces activity 10000-fold; when associated with F-16." evidence="1 5">
    <original>D</original>
    <variation>E</variation>
    <location>
        <position position="103"/>
    </location>
</feature>
<feature type="mutagenesis site" description="Reduces activity 4-fold. Reduces activity 10000-fold; when associated with F-16." evidence="1 5">
    <original>D</original>
    <variation>N</variation>
    <location>
        <position position="103"/>
    </location>
</feature>
<feature type="mutagenesis site" description="Slightly reduces activity and reduces protein stability; when associated with A-127." evidence="4">
    <original>L</original>
    <variation>A</variation>
    <location>
        <position position="125"/>
    </location>
</feature>
<feature type="mutagenesis site" description="Slightly reduces activity and reduces protein stability; when associated with A-125." evidence="4">
    <original>V</original>
    <variation>A</variation>
    <location>
        <position position="127"/>
    </location>
</feature>
<feature type="helix" evidence="7">
    <location>
        <begin position="6"/>
        <end position="22"/>
    </location>
</feature>
<feature type="helix" evidence="7">
    <location>
        <begin position="25"/>
        <end position="30"/>
    </location>
</feature>
<feature type="strand" evidence="7">
    <location>
        <begin position="32"/>
        <end position="41"/>
    </location>
</feature>
<feature type="helix" evidence="7">
    <location>
        <begin position="49"/>
        <end position="61"/>
    </location>
</feature>
<feature type="strand" evidence="6">
    <location>
        <begin position="62"/>
        <end position="64"/>
    </location>
</feature>
<feature type="strand" evidence="7">
    <location>
        <begin position="67"/>
        <end position="72"/>
    </location>
</feature>
<feature type="strand" evidence="7">
    <location>
        <begin position="78"/>
        <end position="92"/>
    </location>
</feature>
<feature type="strand" evidence="7">
    <location>
        <begin position="95"/>
        <end position="107"/>
    </location>
</feature>
<feature type="strand" evidence="7">
    <location>
        <begin position="111"/>
        <end position="119"/>
    </location>
</feature>
<feature type="helix" evidence="7">
    <location>
        <begin position="122"/>
        <end position="124"/>
    </location>
</feature>
<feature type="strand" evidence="8">
    <location>
        <begin position="125"/>
        <end position="127"/>
    </location>
</feature>
<sequence length="131" mass="14536">MNLPTAQEVQGLMARYIELVDVGDIEAIVQMYADDATVEDPFGQPPIHGREQIAAFYRQGLGGGKVRACLTGPVRASHNGCGAMPFRVEMVWNGQPCALDVIDVMRFDEHGRIQTMQAYWSEVNLSVREPQ</sequence>
<keyword id="KW-0002">3D-structure</keyword>
<keyword id="KW-0903">Direct protein sequencing</keyword>
<keyword id="KW-0413">Isomerase</keyword>
<keyword id="KW-0443">Lipid metabolism</keyword>
<keyword id="KW-0753">Steroid metabolism</keyword>
<gene>
    <name type="primary">ksi</name>
</gene>
<protein>
    <recommendedName>
        <fullName>Steroid Delta-isomerase</fullName>
        <ecNumber>5.3.3.1</ecNumber>
    </recommendedName>
    <alternativeName>
        <fullName>Delta(5)-3-ketosteroid isomerase</fullName>
    </alternativeName>
</protein>
<comment type="catalytic activity">
    <reaction>
        <text>a 3-oxo-Delta(5)-steroid = a 3-oxo-Delta(4)-steroid</text>
        <dbReference type="Rhea" id="RHEA:14709"/>
        <dbReference type="ChEBI" id="CHEBI:47907"/>
        <dbReference type="ChEBI" id="CHEBI:47909"/>
        <dbReference type="EC" id="5.3.3.1"/>
    </reaction>
</comment>
<comment type="subunit">
    <text evidence="1 2 5">Homodimer.</text>
</comment>
<comment type="induction">
    <text>By steroids.</text>
</comment>
<proteinExistence type="evidence at protein level"/>
<name>SDIS_PSEPU</name>
<evidence type="ECO:0000269" key="1">
    <source>
    </source>
</evidence>
<evidence type="ECO:0000269" key="2">
    <source>
    </source>
</evidence>
<evidence type="ECO:0000269" key="3">
    <source>
    </source>
</evidence>
<evidence type="ECO:0000269" key="4">
    <source>
    </source>
</evidence>
<evidence type="ECO:0000269" key="5">
    <source>
    </source>
</evidence>
<evidence type="ECO:0007829" key="6">
    <source>
        <dbReference type="PDB" id="6C1J"/>
    </source>
</evidence>
<evidence type="ECO:0007829" key="7">
    <source>
        <dbReference type="PDB" id="6C1X"/>
    </source>
</evidence>
<evidence type="ECO:0007829" key="8">
    <source>
        <dbReference type="PDB" id="7RXK"/>
    </source>
</evidence>
<dbReference type="EC" id="5.3.3.1"/>
<dbReference type="EMBL" id="L13127">
    <property type="protein sequence ID" value="AAA64437.1"/>
    <property type="molecule type" value="Genomic_DNA"/>
</dbReference>
<dbReference type="PIR" id="A25216">
    <property type="entry name" value="SIPSDP"/>
</dbReference>
<dbReference type="PDB" id="1C7H">
    <property type="method" value="X-ray"/>
    <property type="resolution" value="2.50 A"/>
    <property type="chains" value="A=1-131"/>
</dbReference>
<dbReference type="PDB" id="1CQS">
    <property type="method" value="X-ray"/>
    <property type="resolution" value="1.90 A"/>
    <property type="chains" value="A/B=1-131"/>
</dbReference>
<dbReference type="PDB" id="1DMM">
    <property type="method" value="X-ray"/>
    <property type="resolution" value="1.90 A"/>
    <property type="chains" value="A=1-131"/>
</dbReference>
<dbReference type="PDB" id="1DMN">
    <property type="method" value="X-ray"/>
    <property type="resolution" value="2.05 A"/>
    <property type="chains" value="A=1-131"/>
</dbReference>
<dbReference type="PDB" id="1DMQ">
    <property type="method" value="X-ray"/>
    <property type="resolution" value="2.15 A"/>
    <property type="chains" value="A=1-131"/>
</dbReference>
<dbReference type="PDB" id="1E3R">
    <property type="method" value="X-ray"/>
    <property type="resolution" value="2.50 A"/>
    <property type="chains" value="A/B=1-131"/>
</dbReference>
<dbReference type="PDB" id="1E3V">
    <property type="method" value="X-ray"/>
    <property type="resolution" value="2.00 A"/>
    <property type="chains" value="A/B=1-131"/>
</dbReference>
<dbReference type="PDB" id="1E97">
    <property type="method" value="X-ray"/>
    <property type="resolution" value="2.00 A"/>
    <property type="chains" value="A=1-131"/>
</dbReference>
<dbReference type="PDB" id="1EA2">
    <property type="method" value="X-ray"/>
    <property type="resolution" value="1.80 A"/>
    <property type="chains" value="A=1-131"/>
</dbReference>
<dbReference type="PDB" id="1GS3">
    <property type="method" value="X-ray"/>
    <property type="resolution" value="2.10 A"/>
    <property type="chains" value="A=1-131"/>
</dbReference>
<dbReference type="PDB" id="1K41">
    <property type="method" value="X-ray"/>
    <property type="resolution" value="2.20 A"/>
    <property type="chains" value="A/B=1-131"/>
</dbReference>
<dbReference type="PDB" id="1OGX">
    <property type="method" value="X-ray"/>
    <property type="resolution" value="2.00 A"/>
    <property type="chains" value="A/B=1-131"/>
</dbReference>
<dbReference type="PDB" id="1OH0">
    <property type="method" value="X-ray"/>
    <property type="resolution" value="1.10 A"/>
    <property type="chains" value="A/B=1-131"/>
</dbReference>
<dbReference type="PDB" id="1OHO">
    <property type="method" value="X-ray"/>
    <property type="resolution" value="1.90 A"/>
    <property type="chains" value="A=1-131"/>
</dbReference>
<dbReference type="PDB" id="1OPY">
    <property type="method" value="X-ray"/>
    <property type="resolution" value="1.90 A"/>
    <property type="chains" value="A=1-131"/>
</dbReference>
<dbReference type="PDB" id="1VZZ">
    <property type="method" value="X-ray"/>
    <property type="resolution" value="2.30 A"/>
    <property type="chains" value="A/B=1-131"/>
</dbReference>
<dbReference type="PDB" id="1W00">
    <property type="method" value="X-ray"/>
    <property type="resolution" value="2.20 A"/>
    <property type="chains" value="A/B=1-131"/>
</dbReference>
<dbReference type="PDB" id="1W01">
    <property type="method" value="X-ray"/>
    <property type="resolution" value="2.20 A"/>
    <property type="chains" value="A/B=1-131"/>
</dbReference>
<dbReference type="PDB" id="1W02">
    <property type="method" value="X-ray"/>
    <property type="resolution" value="2.30 A"/>
    <property type="chains" value="A=1-131"/>
</dbReference>
<dbReference type="PDB" id="1W6Y">
    <property type="method" value="X-ray"/>
    <property type="resolution" value="2.10 A"/>
    <property type="chains" value="A=1-131"/>
</dbReference>
<dbReference type="PDB" id="2INX">
    <property type="method" value="X-ray"/>
    <property type="resolution" value="1.50 A"/>
    <property type="chains" value="A=1-131"/>
</dbReference>
<dbReference type="PDB" id="2PZV">
    <property type="method" value="X-ray"/>
    <property type="resolution" value="1.25 A"/>
    <property type="chains" value="A/B/C/D=1-131"/>
</dbReference>
<dbReference type="PDB" id="3CPO">
    <property type="method" value="X-ray"/>
    <property type="resolution" value="1.24 A"/>
    <property type="chains" value="A=1-131"/>
</dbReference>
<dbReference type="PDB" id="3FZW">
    <property type="method" value="X-ray"/>
    <property type="resolution" value="1.32 A"/>
    <property type="chains" value="A/B=1-131"/>
</dbReference>
<dbReference type="PDB" id="3IPT">
    <property type="method" value="X-ray"/>
    <property type="resolution" value="1.63 A"/>
    <property type="chains" value="A/B/C/D=1-131"/>
</dbReference>
<dbReference type="PDB" id="3OWS">
    <property type="method" value="X-ray"/>
    <property type="resolution" value="1.71 A"/>
    <property type="chains" value="A/B/C/D=1-131"/>
</dbReference>
<dbReference type="PDB" id="3OWU">
    <property type="method" value="X-ray"/>
    <property type="resolution" value="1.70 A"/>
    <property type="chains" value="A/B/C/D=1-131"/>
</dbReference>
<dbReference type="PDB" id="3OWY">
    <property type="method" value="X-ray"/>
    <property type="resolution" value="2.30 A"/>
    <property type="chains" value="A/B/C/D/E/F/G/H=1-131"/>
</dbReference>
<dbReference type="PDB" id="3OX9">
    <property type="method" value="X-ray"/>
    <property type="resolution" value="2.00 A"/>
    <property type="chains" value="A/B/C/D=1-131"/>
</dbReference>
<dbReference type="PDB" id="3OXA">
    <property type="method" value="X-ray"/>
    <property type="resolution" value="1.89 A"/>
    <property type="chains" value="A/B/C/D=1-131"/>
</dbReference>
<dbReference type="PDB" id="3RGR">
    <property type="method" value="X-ray"/>
    <property type="resolution" value="1.59 A"/>
    <property type="chains" value="A=1-131"/>
</dbReference>
<dbReference type="PDB" id="3SED">
    <property type="method" value="X-ray"/>
    <property type="resolution" value="1.30 A"/>
    <property type="chains" value="A=3-127"/>
</dbReference>
<dbReference type="PDB" id="3T8N">
    <property type="method" value="X-ray"/>
    <property type="resolution" value="1.47 A"/>
    <property type="chains" value="A/B/D/F=1-131"/>
</dbReference>
<dbReference type="PDB" id="3VGN">
    <property type="method" value="X-ray"/>
    <property type="resolution" value="1.30 A"/>
    <property type="chains" value="A/B=1-131"/>
</dbReference>
<dbReference type="PDB" id="3VSY">
    <property type="method" value="X-ray"/>
    <property type="resolution" value="1.50 A"/>
    <property type="chains" value="A/B=3-131"/>
</dbReference>
<dbReference type="PDB" id="4CDL">
    <property type="method" value="X-ray"/>
    <property type="resolution" value="2.50 A"/>
    <property type="chains" value="A=1-131"/>
</dbReference>
<dbReference type="PDB" id="4K1U">
    <property type="method" value="X-ray"/>
    <property type="resolution" value="2.00 A"/>
    <property type="chains" value="A/B=1-131"/>
</dbReference>
<dbReference type="PDB" id="4K1V">
    <property type="method" value="X-ray"/>
    <property type="resolution" value="1.80 A"/>
    <property type="chains" value="A=1-131"/>
</dbReference>
<dbReference type="PDB" id="5AI1">
    <property type="method" value="X-ray"/>
    <property type="resolution" value="2.10 A"/>
    <property type="chains" value="A=1-131"/>
</dbReference>
<dbReference type="PDB" id="5D81">
    <property type="method" value="X-ray"/>
    <property type="resolution" value="1.39 A"/>
    <property type="chains" value="A=1-131"/>
</dbReference>
<dbReference type="PDB" id="5D82">
    <property type="method" value="X-ray"/>
    <property type="resolution" value="1.37 A"/>
    <property type="chains" value="A/B=1-131"/>
</dbReference>
<dbReference type="PDB" id="5D83">
    <property type="method" value="X-ray"/>
    <property type="resolution" value="1.70 A"/>
    <property type="chains" value="A/B=1-131"/>
</dbReference>
<dbReference type="PDB" id="5G2G">
    <property type="method" value="X-ray"/>
    <property type="resolution" value="1.60 A"/>
    <property type="chains" value="A/B=2-128"/>
</dbReference>
<dbReference type="PDB" id="5KP1">
    <property type="method" value="X-ray"/>
    <property type="resolution" value="1.22 A"/>
    <property type="chains" value="A/B/C/D=1-131"/>
</dbReference>
<dbReference type="PDB" id="5KP3">
    <property type="method" value="X-ray"/>
    <property type="resolution" value="1.70 A"/>
    <property type="chains" value="A/B=1-131"/>
</dbReference>
<dbReference type="PDB" id="5KP4">
    <property type="method" value="X-ray"/>
    <property type="resolution" value="1.71 A"/>
    <property type="chains" value="A/B=1-131"/>
</dbReference>
<dbReference type="PDB" id="6C17">
    <property type="method" value="X-ray"/>
    <property type="resolution" value="1.10 A"/>
    <property type="chains" value="A=1-131"/>
</dbReference>
<dbReference type="PDB" id="6C1J">
    <property type="method" value="X-ray"/>
    <property type="resolution" value="1.06 A"/>
    <property type="chains" value="A=1-131"/>
</dbReference>
<dbReference type="PDB" id="6C1X">
    <property type="method" value="X-ray"/>
    <property type="resolution" value="1.05 A"/>
    <property type="chains" value="A=1-131"/>
</dbReference>
<dbReference type="PDB" id="6F4Y">
    <property type="method" value="X-ray"/>
    <property type="resolution" value="1.92 A"/>
    <property type="chains" value="A/B=3-127"/>
</dbReference>
<dbReference type="PDB" id="6F50">
    <property type="method" value="X-ray"/>
    <property type="resolution" value="2.00 A"/>
    <property type="chains" value="A/B=3-127"/>
</dbReference>
<dbReference type="PDB" id="6F53">
    <property type="method" value="X-ray"/>
    <property type="resolution" value="1.49 A"/>
    <property type="chains" value="A=3-127"/>
</dbReference>
<dbReference type="PDB" id="6F54">
    <property type="method" value="X-ray"/>
    <property type="resolution" value="1.08 A"/>
    <property type="chains" value="A/B=3-127"/>
</dbReference>
<dbReference type="PDB" id="6TZD">
    <property type="method" value="X-ray"/>
    <property type="resolution" value="1.45 A"/>
    <property type="chains" value="A/B=1-131"/>
</dbReference>
<dbReference type="PDB" id="6U1Z">
    <property type="method" value="X-ray"/>
    <property type="resolution" value="1.50 A"/>
    <property type="chains" value="A/B=1-131"/>
</dbReference>
<dbReference type="PDB" id="6U4I">
    <property type="method" value="X-ray"/>
    <property type="resolution" value="1.55 A"/>
    <property type="chains" value="A/B=1-131"/>
</dbReference>
<dbReference type="PDB" id="6UBQ">
    <property type="method" value="X-ray"/>
    <property type="resolution" value="1.30 A"/>
    <property type="chains" value="A/B=1-131"/>
</dbReference>
<dbReference type="PDB" id="6UCN">
    <property type="method" value="X-ray"/>
    <property type="resolution" value="1.32 A"/>
    <property type="chains" value="A/B=1-131"/>
</dbReference>
<dbReference type="PDB" id="6UCW">
    <property type="method" value="X-ray"/>
    <property type="resolution" value="1.25 A"/>
    <property type="chains" value="A/B=1-131"/>
</dbReference>
<dbReference type="PDB" id="6UCY">
    <property type="method" value="X-ray"/>
    <property type="resolution" value="1.15 A"/>
    <property type="chains" value="A/B=1-131"/>
</dbReference>
<dbReference type="PDB" id="6UFS">
    <property type="method" value="X-ray"/>
    <property type="resolution" value="1.47 A"/>
    <property type="chains" value="A/B=1-131"/>
</dbReference>
<dbReference type="PDB" id="7RXF">
    <property type="method" value="X-ray"/>
    <property type="resolution" value="1.16 A"/>
    <property type="chains" value="A/B=1-131"/>
</dbReference>
<dbReference type="PDB" id="7RXK">
    <property type="method" value="X-ray"/>
    <property type="resolution" value="1.10 A"/>
    <property type="chains" value="A/B=1-131"/>
</dbReference>
<dbReference type="PDB" id="7RY4">
    <property type="method" value="X-ray"/>
    <property type="resolution" value="1.11 A"/>
    <property type="chains" value="A/B=1-131"/>
</dbReference>
<dbReference type="PDBsum" id="1C7H"/>
<dbReference type="PDBsum" id="1CQS"/>
<dbReference type="PDBsum" id="1DMM"/>
<dbReference type="PDBsum" id="1DMN"/>
<dbReference type="PDBsum" id="1DMQ"/>
<dbReference type="PDBsum" id="1E3R"/>
<dbReference type="PDBsum" id="1E3V"/>
<dbReference type="PDBsum" id="1E97"/>
<dbReference type="PDBsum" id="1EA2"/>
<dbReference type="PDBsum" id="1GS3"/>
<dbReference type="PDBsum" id="1K41"/>
<dbReference type="PDBsum" id="1OGX"/>
<dbReference type="PDBsum" id="1OH0"/>
<dbReference type="PDBsum" id="1OHO"/>
<dbReference type="PDBsum" id="1OPY"/>
<dbReference type="PDBsum" id="1VZZ"/>
<dbReference type="PDBsum" id="1W00"/>
<dbReference type="PDBsum" id="1W01"/>
<dbReference type="PDBsum" id="1W02"/>
<dbReference type="PDBsum" id="1W6Y"/>
<dbReference type="PDBsum" id="2INX"/>
<dbReference type="PDBsum" id="2PZV"/>
<dbReference type="PDBsum" id="3CPO"/>
<dbReference type="PDBsum" id="3FZW"/>
<dbReference type="PDBsum" id="3IPT"/>
<dbReference type="PDBsum" id="3OWS"/>
<dbReference type="PDBsum" id="3OWU"/>
<dbReference type="PDBsum" id="3OWY"/>
<dbReference type="PDBsum" id="3OX9"/>
<dbReference type="PDBsum" id="3OXA"/>
<dbReference type="PDBsum" id="3RGR"/>
<dbReference type="PDBsum" id="3SED"/>
<dbReference type="PDBsum" id="3T8N"/>
<dbReference type="PDBsum" id="3VGN"/>
<dbReference type="PDBsum" id="3VSY"/>
<dbReference type="PDBsum" id="4CDL"/>
<dbReference type="PDBsum" id="4K1U"/>
<dbReference type="PDBsum" id="4K1V"/>
<dbReference type="PDBsum" id="5AI1"/>
<dbReference type="PDBsum" id="5D81"/>
<dbReference type="PDBsum" id="5D82"/>
<dbReference type="PDBsum" id="5D83"/>
<dbReference type="PDBsum" id="5G2G"/>
<dbReference type="PDBsum" id="5KP1"/>
<dbReference type="PDBsum" id="5KP3"/>
<dbReference type="PDBsum" id="5KP4"/>
<dbReference type="PDBsum" id="6C17"/>
<dbReference type="PDBsum" id="6C1J"/>
<dbReference type="PDBsum" id="6C1X"/>
<dbReference type="PDBsum" id="6F4Y"/>
<dbReference type="PDBsum" id="6F50"/>
<dbReference type="PDBsum" id="6F53"/>
<dbReference type="PDBsum" id="6F54"/>
<dbReference type="PDBsum" id="6TZD"/>
<dbReference type="PDBsum" id="6U1Z"/>
<dbReference type="PDBsum" id="6U4I"/>
<dbReference type="PDBsum" id="6UBQ"/>
<dbReference type="PDBsum" id="6UCN"/>
<dbReference type="PDBsum" id="6UCW"/>
<dbReference type="PDBsum" id="6UCY"/>
<dbReference type="PDBsum" id="6UFS"/>
<dbReference type="PDBsum" id="7RXF"/>
<dbReference type="PDBsum" id="7RXK"/>
<dbReference type="PDBsum" id="7RY4"/>
<dbReference type="SMR" id="P07445"/>
<dbReference type="BindingDB" id="P07445"/>
<dbReference type="ChEMBL" id="CHEMBL2321641"/>
<dbReference type="DrugBank" id="DB03619">
    <property type="generic name" value="Deoxycholic acid"/>
</dbReference>
<dbReference type="DrugBank" id="DB03515">
    <property type="generic name" value="Equilenin"/>
</dbReference>
<dbReference type="DrugCentral" id="P07445"/>
<dbReference type="BRENDA" id="5.3.3.1">
    <property type="organism ID" value="5092"/>
</dbReference>
<dbReference type="EvolutionaryTrace" id="P07445"/>
<dbReference type="GO" id="GO:0004769">
    <property type="term" value="F:steroid Delta-isomerase activity"/>
    <property type="evidence" value="ECO:0007669"/>
    <property type="project" value="UniProtKB-EC"/>
</dbReference>
<dbReference type="GO" id="GO:0008202">
    <property type="term" value="P:steroid metabolic process"/>
    <property type="evidence" value="ECO:0007669"/>
    <property type="project" value="UniProtKB-KW"/>
</dbReference>
<dbReference type="CDD" id="cd00781">
    <property type="entry name" value="ketosteroid_isomerase"/>
    <property type="match status" value="1"/>
</dbReference>
<dbReference type="Gene3D" id="3.10.450.50">
    <property type="match status" value="1"/>
</dbReference>
<dbReference type="InterPro" id="IPR039256">
    <property type="entry name" value="Ketosteroid_isomerase"/>
</dbReference>
<dbReference type="InterPro" id="IPR032710">
    <property type="entry name" value="NTF2-like_dom_sf"/>
</dbReference>
<dbReference type="InterPro" id="IPR037401">
    <property type="entry name" value="SnoaL-like"/>
</dbReference>
<dbReference type="Pfam" id="PF12680">
    <property type="entry name" value="SnoaL_2"/>
    <property type="match status" value="1"/>
</dbReference>
<dbReference type="SUPFAM" id="SSF54427">
    <property type="entry name" value="NTF2-like"/>
    <property type="match status" value="1"/>
</dbReference>